<protein>
    <recommendedName>
        <fullName>Myc proto-oncogene protein</fullName>
    </recommendedName>
    <alternativeName>
        <fullName>Proto-oncogene c-Myc</fullName>
    </alternativeName>
    <alternativeName>
        <fullName>Transcription factor p64</fullName>
    </alternativeName>
</protein>
<evidence type="ECO:0000250" key="1"/>
<evidence type="ECO:0000250" key="2">
    <source>
        <dbReference type="UniProtKB" id="P01106"/>
    </source>
</evidence>
<evidence type="ECO:0000250" key="3">
    <source>
        <dbReference type="UniProtKB" id="P01108"/>
    </source>
</evidence>
<evidence type="ECO:0000255" key="4">
    <source>
        <dbReference type="PROSITE-ProRule" id="PRU00981"/>
    </source>
</evidence>
<evidence type="ECO:0000256" key="5">
    <source>
        <dbReference type="SAM" id="MobiDB-lite"/>
    </source>
</evidence>
<evidence type="ECO:0000305" key="6"/>
<comment type="function">
    <text evidence="2 3">Transcription factor that binds DNA in a non-specific manner, yet also specifically recognizes the core sequence 5'-CAC[GA]TG-3'. Activates the transcription of growth-related genes. Binds to the VEGFA promoter, promoting VEGFA production and subsequent sprouting angiogenesis. Regulator of somatic reprogramming, controls self-renewal of embryonic stem cells. Functions with TAF6L to activate target gene expression through RNA polymerase II pause release (By similarity). Positively regulates transcription of HNRNPA1, HNRNPA2 and PTBP1 which in turn regulate splicing of pyruvate kinase PKM by binding repressively to sequences flanking PKM exon 9, inhibiting exon 9 inclusion and resulting in exon 10 inclusion and production of the PKM M2 isoform (By similarity).</text>
</comment>
<comment type="subunit">
    <text evidence="2 3">Efficient DNA binding requires dimerization with another bHLH protein. Binds DNA as a heterodimer with MAX (By similarity). Interacts with TAF1C and SPAG9. Interacts with PARP10. Interacts with KDM5A and KDM5B. Interacts (when phosphorylated at Thr-58 and Ser-62) with FBXW7. Interacts with PIM2. Interacts with RIOX1. The heterodimer MYC:MAX interacts with ABI1; the interaction may enhance MYC:MAX transcriptional activity. Interacts with TRIM6 (By similarity). Interacts with NPM1; the binary complex is recruited to the promoter of MYC target genes and enhances their transcription (By similarity). Interacts with CIP2A; leading to the stabilization of MYC (By similarity). Interacts with NUP205 (By similarity). Interacts with HEATR1; the interaction is required for localization of MYC to the nucleolus (By similarity).</text>
</comment>
<comment type="subcellular location">
    <subcellularLocation>
        <location evidence="2">Nucleus</location>
        <location evidence="2">Nucleoplasm</location>
    </subcellularLocation>
    <subcellularLocation>
        <location evidence="2">Nucleus</location>
        <location evidence="2">Nucleolus</location>
    </subcellularLocation>
    <subcellularLocation>
        <location evidence="2">Nucleus</location>
    </subcellularLocation>
    <subcellularLocation>
        <location evidence="2">Cytoplasm</location>
    </subcellularLocation>
    <subcellularLocation>
        <location evidence="2">Chromosome</location>
    </subcellularLocation>
    <text evidence="2">Association with chromatin is reduced by hyperphosphorylation. Localization to the nucleolus is dependent on HEATR1.</text>
</comment>
<comment type="domain">
    <text evidence="2">The 9aaTAD motif is a transactivation domain present in a large number of yeast and animal transcription factors.</text>
</comment>
<comment type="PTM">
    <text evidence="2 3">Phosphorylated by PRKDC (By similarity). Phosphorylation at Ser-329 by PIM2 leads to the stabilization of MYC (By similarity). Phosphorylation at Ser-62 by CDK2 prevents Ras-induced senescence. Phosphorylated at Ser-62 by DYRK2; this primes the protein for subsequent phosphorylation by GSK3B at Thr-58. Phosphorylation at Thr-58 and Ser-62 by GSK3 is required for ubiquitination and degradation by the proteasome. Dephosphorylation at multiple sites by the PNUTS-PP1 complex promotes MYC stability by preventing ubiquitination by the SCF(FBXW7) complex. Dephosphorylation at Ser-62 by protein phosphatase 2A (PPP2CA) promotes its degradation; interaction with PPP2CA is enhanced by AMBRA1 (By similarity).</text>
</comment>
<comment type="PTM">
    <text evidence="2 3">Ubiquitinated by the SCF(FBXW7) complex when phosphorylated at Thr-58 and Ser-62, leading to its degradation by the proteasome. Ubiquitination is counteracted by USP28 in the nucleoplasm and USP36 in the nucleolus, both interacting with of FBXW7, leading to its deubiquitination and preventing degradation. Also polyubiquitinated by the DCX(TRPC4AP) complex. Ubiquitinated by UBR5 when not forming a heterodimer with another bHLH protein, leading to its degradation: UBR5 recognizes and binds a degron that is only available upon heterodimer dissociation (By similarity). Ubiquitinated by TRIM6 in a phosphorylation-independent manner.</text>
</comment>
<comment type="sequence caution" evidence="6">
    <conflict type="erroneous initiation">
        <sequence resource="EMBL-CDS" id="CAA31619"/>
    </conflict>
    <text>Extended N-terminus.</text>
</comment>
<sequence>MPLNVSFANRNYDLDYDSVQPYFYCDEEENFYQQQQQSELQPPAPSEDIWKKFELLPTPPLSPSRRSGLCSPPCVTVASFSPPGDDDGGGGSFSTADQLEMVTELLGGDMVNQSFICDPDDETFIKNIIIQDCMWSGFSAAAKLVSEKLASYQAARKDTGCPSPARGHSGCSSSSLYLQDLSPRASECIDPSVVFPYPLNDSSSPKPCASPDSTAFSPSSDSLLSSTESSPRASPEPLVLHEETPPTTSSDSEEEQEDEEEIDVVSVEKRQPSARRSESVSPPAGSHSKPPHSPLVLKRCHVSTHQHNYAAPPSTRKDCPAAKRAKLDSGRVLKQISNNRKCASPRSSDTEENDKRRTHNVLERQRRNELKRSFFALRDQIPELENNEKAPKVIILKKATAYILSVQAEEQKLISEKDLLRKRREQLKQKLEQLRNSCA</sequence>
<accession>P22555</accession>
<reference key="1">
    <citation type="journal article" date="1989" name="Oncogene">
        <title>Fused transcripts of c-myc and a new cellular locus, hcr in a primary liver tumor.</title>
        <authorList>
            <person name="Etiemble J."/>
            <person name="Moeroey T."/>
            <person name="Jacquemin E."/>
            <person name="Tiollais P."/>
            <person name="Buendia M.-A."/>
        </authorList>
    </citation>
    <scope>NUCLEOTIDE SEQUENCE [MRNA]</scope>
    <source>
        <tissue>Hepatoma</tissue>
    </source>
</reference>
<proteinExistence type="evidence at transcript level"/>
<dbReference type="EMBL" id="X13232">
    <property type="protein sequence ID" value="CAA31619.1"/>
    <property type="status" value="ALT_INIT"/>
    <property type="molecule type" value="mRNA"/>
</dbReference>
<dbReference type="PIR" id="S03325">
    <property type="entry name" value="S03325"/>
</dbReference>
<dbReference type="SMR" id="P22555"/>
<dbReference type="GlyCosmos" id="P22555">
    <property type="glycosylation" value="1 site, No reported glycans"/>
</dbReference>
<dbReference type="OrthoDB" id="5344169at2759"/>
<dbReference type="GO" id="GO:0005737">
    <property type="term" value="C:cytoplasm"/>
    <property type="evidence" value="ECO:0007669"/>
    <property type="project" value="UniProtKB-SubCell"/>
</dbReference>
<dbReference type="GO" id="GO:0005730">
    <property type="term" value="C:nucleolus"/>
    <property type="evidence" value="ECO:0000250"/>
    <property type="project" value="UniProtKB"/>
</dbReference>
<dbReference type="GO" id="GO:0005654">
    <property type="term" value="C:nucleoplasm"/>
    <property type="evidence" value="ECO:0000250"/>
    <property type="project" value="UniProtKB"/>
</dbReference>
<dbReference type="GO" id="GO:0000981">
    <property type="term" value="F:DNA-binding transcription factor activity, RNA polymerase II-specific"/>
    <property type="evidence" value="ECO:0000250"/>
    <property type="project" value="UniProtKB"/>
</dbReference>
<dbReference type="GO" id="GO:0070888">
    <property type="term" value="F:E-box binding"/>
    <property type="evidence" value="ECO:0000250"/>
    <property type="project" value="UniProtKB"/>
</dbReference>
<dbReference type="GO" id="GO:0046983">
    <property type="term" value="F:protein dimerization activity"/>
    <property type="evidence" value="ECO:0007669"/>
    <property type="project" value="InterPro"/>
</dbReference>
<dbReference type="GO" id="GO:0044877">
    <property type="term" value="F:protein-containing complex binding"/>
    <property type="evidence" value="ECO:0000250"/>
    <property type="project" value="UniProtKB"/>
</dbReference>
<dbReference type="GO" id="GO:0006338">
    <property type="term" value="P:chromatin remodeling"/>
    <property type="evidence" value="ECO:0000250"/>
    <property type="project" value="UniProtKB"/>
</dbReference>
<dbReference type="GO" id="GO:0051276">
    <property type="term" value="P:chromosome organization"/>
    <property type="evidence" value="ECO:0000250"/>
    <property type="project" value="UniProtKB"/>
</dbReference>
<dbReference type="GO" id="GO:0006974">
    <property type="term" value="P:DNA damage response"/>
    <property type="evidence" value="ECO:0000250"/>
    <property type="project" value="UniProtKB"/>
</dbReference>
<dbReference type="GO" id="GO:0000082">
    <property type="term" value="P:G1/S transition of mitotic cell cycle"/>
    <property type="evidence" value="ECO:0000250"/>
    <property type="project" value="UniProtKB"/>
</dbReference>
<dbReference type="GO" id="GO:0006879">
    <property type="term" value="P:intracellular iron ion homeostasis"/>
    <property type="evidence" value="ECO:0000250"/>
    <property type="project" value="UniProtKB"/>
</dbReference>
<dbReference type="GO" id="GO:0000165">
    <property type="term" value="P:MAPK cascade"/>
    <property type="evidence" value="ECO:0000250"/>
    <property type="project" value="UniProtKB"/>
</dbReference>
<dbReference type="GO" id="GO:0051782">
    <property type="term" value="P:negative regulation of cell division"/>
    <property type="evidence" value="ECO:0000250"/>
    <property type="project" value="UniProtKB"/>
</dbReference>
<dbReference type="GO" id="GO:0045656">
    <property type="term" value="P:negative regulation of monocyte differentiation"/>
    <property type="evidence" value="ECO:0000250"/>
    <property type="project" value="UniProtKB"/>
</dbReference>
<dbReference type="GO" id="GO:0045893">
    <property type="term" value="P:positive regulation of DNA-templated transcription"/>
    <property type="evidence" value="ECO:0000250"/>
    <property type="project" value="UniProtKB"/>
</dbReference>
<dbReference type="GO" id="GO:0050679">
    <property type="term" value="P:positive regulation of epithelial cell proliferation"/>
    <property type="evidence" value="ECO:0000250"/>
    <property type="project" value="UniProtKB"/>
</dbReference>
<dbReference type="GO" id="GO:0048146">
    <property type="term" value="P:positive regulation of fibroblast proliferation"/>
    <property type="evidence" value="ECO:0000250"/>
    <property type="project" value="UniProtKB"/>
</dbReference>
<dbReference type="GO" id="GO:0045944">
    <property type="term" value="P:positive regulation of transcription by RNA polymerase II"/>
    <property type="evidence" value="ECO:0000250"/>
    <property type="project" value="UniProtKB"/>
</dbReference>
<dbReference type="GO" id="GO:0006355">
    <property type="term" value="P:regulation of DNA-templated transcription"/>
    <property type="evidence" value="ECO:0000250"/>
    <property type="project" value="UniProtKB"/>
</dbReference>
<dbReference type="GO" id="GO:1904672">
    <property type="term" value="P:regulation of somatic stem cell population maintenance"/>
    <property type="evidence" value="ECO:0000250"/>
    <property type="project" value="UniProtKB"/>
</dbReference>
<dbReference type="GO" id="GO:0032204">
    <property type="term" value="P:regulation of telomere maintenance"/>
    <property type="evidence" value="ECO:0000250"/>
    <property type="project" value="UniProtKB"/>
</dbReference>
<dbReference type="GO" id="GO:0016072">
    <property type="term" value="P:rRNA metabolic process"/>
    <property type="evidence" value="ECO:0000250"/>
    <property type="project" value="UniProtKB"/>
</dbReference>
<dbReference type="CDD" id="cd11458">
    <property type="entry name" value="bHLHzip_c-Myc"/>
    <property type="match status" value="1"/>
</dbReference>
<dbReference type="FunFam" id="4.10.280.10:FF:000019">
    <property type="entry name" value="Myc proto-oncogene protein"/>
    <property type="match status" value="1"/>
</dbReference>
<dbReference type="Gene3D" id="4.10.280.10">
    <property type="entry name" value="Helix-loop-helix DNA-binding domain"/>
    <property type="match status" value="1"/>
</dbReference>
<dbReference type="InterPro" id="IPR011598">
    <property type="entry name" value="bHLH_dom"/>
</dbReference>
<dbReference type="InterPro" id="IPR036638">
    <property type="entry name" value="HLH_DNA-bd_sf"/>
</dbReference>
<dbReference type="InterPro" id="IPR003327">
    <property type="entry name" value="Myc-LZ"/>
</dbReference>
<dbReference type="InterPro" id="IPR050433">
    <property type="entry name" value="Myc_transcription_factors"/>
</dbReference>
<dbReference type="InterPro" id="IPR002418">
    <property type="entry name" value="Tscrpt_reg_Myc"/>
</dbReference>
<dbReference type="InterPro" id="IPR012682">
    <property type="entry name" value="Tscrpt_reg_Myc_N"/>
</dbReference>
<dbReference type="PANTHER" id="PTHR45851">
    <property type="entry name" value="MYC PROTO-ONCOGENE"/>
    <property type="match status" value="1"/>
</dbReference>
<dbReference type="Pfam" id="PF00010">
    <property type="entry name" value="HLH"/>
    <property type="match status" value="1"/>
</dbReference>
<dbReference type="Pfam" id="PF02344">
    <property type="entry name" value="Myc-LZ"/>
    <property type="match status" value="1"/>
</dbReference>
<dbReference type="Pfam" id="PF01056">
    <property type="entry name" value="Myc_N"/>
    <property type="match status" value="1"/>
</dbReference>
<dbReference type="PIRSF" id="PIRSF001705">
    <property type="entry name" value="Myc_protein"/>
    <property type="match status" value="1"/>
</dbReference>
<dbReference type="PRINTS" id="PR00044">
    <property type="entry name" value="LEUZIPPRMYC"/>
</dbReference>
<dbReference type="SMART" id="SM00353">
    <property type="entry name" value="HLH"/>
    <property type="match status" value="1"/>
</dbReference>
<dbReference type="SUPFAM" id="SSF47459">
    <property type="entry name" value="HLH, helix-loop-helix DNA-binding domain"/>
    <property type="match status" value="1"/>
</dbReference>
<dbReference type="PROSITE" id="PS50888">
    <property type="entry name" value="BHLH"/>
    <property type="match status" value="1"/>
</dbReference>
<keyword id="KW-0007">Acetylation</keyword>
<keyword id="KW-0010">Activator</keyword>
<keyword id="KW-0158">Chromosome</keyword>
<keyword id="KW-0963">Cytoplasm</keyword>
<keyword id="KW-0238">DNA-binding</keyword>
<keyword id="KW-0325">Glycoprotein</keyword>
<keyword id="KW-1017">Isopeptide bond</keyword>
<keyword id="KW-0539">Nucleus</keyword>
<keyword id="KW-0597">Phosphoprotein</keyword>
<keyword id="KW-0656">Proto-oncogene</keyword>
<keyword id="KW-0804">Transcription</keyword>
<keyword id="KW-0805">Transcription regulation</keyword>
<keyword id="KW-0832">Ubl conjugation</keyword>
<feature type="chain" id="PRO_0000127295" description="Myc proto-oncogene protein">
    <location>
        <begin position="1"/>
        <end position="439"/>
    </location>
</feature>
<feature type="domain" description="bHLH" evidence="4">
    <location>
        <begin position="354"/>
        <end position="406"/>
    </location>
</feature>
<feature type="region of interest" description="Disordered" evidence="5">
    <location>
        <begin position="201"/>
        <end position="360"/>
    </location>
</feature>
<feature type="region of interest" description="Leucine-zipper">
    <location>
        <begin position="413"/>
        <end position="434"/>
    </location>
</feature>
<feature type="short sequence motif" description="9aaTAD" evidence="2">
    <location>
        <begin position="100"/>
        <end position="108"/>
    </location>
</feature>
<feature type="short sequence motif" description="UBR5-degron" evidence="2">
    <location>
        <begin position="355"/>
        <end position="364"/>
    </location>
</feature>
<feature type="compositionally biased region" description="Low complexity" evidence="5">
    <location>
        <begin position="210"/>
        <end position="237"/>
    </location>
</feature>
<feature type="compositionally biased region" description="Acidic residues" evidence="5">
    <location>
        <begin position="251"/>
        <end position="263"/>
    </location>
</feature>
<feature type="compositionally biased region" description="Basic and acidic residues" evidence="5">
    <location>
        <begin position="266"/>
        <end position="278"/>
    </location>
</feature>
<feature type="compositionally biased region" description="Basic and acidic residues" evidence="5">
    <location>
        <begin position="315"/>
        <end position="331"/>
    </location>
</feature>
<feature type="compositionally biased region" description="Polar residues" evidence="5">
    <location>
        <begin position="335"/>
        <end position="347"/>
    </location>
</feature>
<feature type="modified residue" description="Phosphoserine" evidence="2">
    <location>
        <position position="6"/>
    </location>
</feature>
<feature type="modified residue" description="Phosphothreonine; by GSK3; alternate" evidence="2">
    <location>
        <position position="58"/>
    </location>
</feature>
<feature type="modified residue" description="Phosphoserine; by DYRK2, GSK3 and CDK2" evidence="2">
    <location>
        <position position="62"/>
    </location>
</feature>
<feature type="modified residue" description="Phosphoserine" evidence="2">
    <location>
        <position position="71"/>
    </location>
</feature>
<feature type="modified residue" description="Phosphoserine" evidence="2">
    <location>
        <position position="81"/>
    </location>
</feature>
<feature type="modified residue" description="N6-acetyllysine; by PCAF; alternate" evidence="2">
    <location>
        <position position="143"/>
    </location>
</feature>
<feature type="modified residue" description="N6-acetyllysine; alternate" evidence="2">
    <location>
        <position position="148"/>
    </location>
</feature>
<feature type="modified residue" description="Phosphoserine" evidence="2">
    <location>
        <position position="151"/>
    </location>
</feature>
<feature type="modified residue" description="N6-acetyllysine; by PCAF" evidence="2">
    <location>
        <position position="157"/>
    </location>
</feature>
<feature type="modified residue" description="Phosphoserine" evidence="2">
    <location>
        <position position="293"/>
    </location>
</feature>
<feature type="modified residue" description="Phosphoserine" evidence="2">
    <location>
        <position position="314"/>
    </location>
</feature>
<feature type="modified residue" description="Phosphothreonine" evidence="2">
    <location>
        <position position="315"/>
    </location>
</feature>
<feature type="modified residue" description="N6-acetyllysine; by PCAF" evidence="2">
    <location>
        <position position="317"/>
    </location>
</feature>
<feature type="modified residue" description="N6-acetyllysine; by PCAF" evidence="2">
    <location>
        <position position="323"/>
    </location>
</feature>
<feature type="modified residue" description="Phosphoserine; by PIM2; in vitro" evidence="3">
    <location>
        <position position="329"/>
    </location>
</feature>
<feature type="modified residue" description="Phosphoserine" evidence="2">
    <location>
        <position position="344"/>
    </location>
</feature>
<feature type="modified residue" description="Phosphoserine" evidence="2">
    <location>
        <position position="347"/>
    </location>
</feature>
<feature type="modified residue" description="Phosphoserine" evidence="2">
    <location>
        <position position="348"/>
    </location>
</feature>
<feature type="modified residue" description="N6-acetyllysine; by PCAF" evidence="2">
    <location>
        <position position="371"/>
    </location>
</feature>
<feature type="glycosylation site" description="O-linked (GlcNAc) threonine; alternate" evidence="1">
    <location>
        <position position="58"/>
    </location>
</feature>
<feature type="cross-link" description="Glycyl lysine isopeptide (Lys-Gly) (interchain with G-Cter in SUMO2)" evidence="2">
    <location>
        <position position="52"/>
    </location>
</feature>
<feature type="cross-link" description="Glycyl lysine isopeptide (Lys-Gly) (interchain with G-Cter in SUMO2); alternate" evidence="2">
    <location>
        <position position="143"/>
    </location>
</feature>
<feature type="cross-link" description="Glycyl lysine isopeptide (Lys-Gly) (interchain with G-Cter in SUMO2); alternate" evidence="2">
    <location>
        <position position="148"/>
    </location>
</feature>
<feature type="cross-link" description="Glycyl lysine isopeptide (Lys-Gly) (interchain with G-Cter in SUMO2)" evidence="2">
    <location>
        <position position="298"/>
    </location>
</feature>
<organism>
    <name type="scientific">Marmota monax</name>
    <name type="common">Woodchuck</name>
    <dbReference type="NCBI Taxonomy" id="9995"/>
    <lineage>
        <taxon>Eukaryota</taxon>
        <taxon>Metazoa</taxon>
        <taxon>Chordata</taxon>
        <taxon>Craniata</taxon>
        <taxon>Vertebrata</taxon>
        <taxon>Euteleostomi</taxon>
        <taxon>Mammalia</taxon>
        <taxon>Eutheria</taxon>
        <taxon>Euarchontoglires</taxon>
        <taxon>Glires</taxon>
        <taxon>Rodentia</taxon>
        <taxon>Sciuromorpha</taxon>
        <taxon>Sciuridae</taxon>
        <taxon>Xerinae</taxon>
        <taxon>Marmotini</taxon>
        <taxon>Marmota</taxon>
    </lineage>
</organism>
<name>MYC_MARMO</name>
<gene>
    <name type="primary">MYC</name>
</gene>